<accession>Q1ASC4</accession>
<organism>
    <name type="scientific">Rubrobacter xylanophilus (strain DSM 9941 / JCM 11954 / NBRC 16129 / PRD-1)</name>
    <dbReference type="NCBI Taxonomy" id="266117"/>
    <lineage>
        <taxon>Bacteria</taxon>
        <taxon>Bacillati</taxon>
        <taxon>Actinomycetota</taxon>
        <taxon>Rubrobacteria</taxon>
        <taxon>Rubrobacterales</taxon>
        <taxon>Rubrobacteraceae</taxon>
        <taxon>Rubrobacter</taxon>
    </lineage>
</organism>
<gene>
    <name evidence="1" type="primary">thiM</name>
    <name type="ordered locus">Rxyl_2790</name>
</gene>
<name>THIM_RUBXD</name>
<comment type="function">
    <text evidence="1">Catalyzes the phosphorylation of the hydroxyl group of 4-methyl-5-beta-hydroxyethylthiazole (THZ).</text>
</comment>
<comment type="catalytic activity">
    <reaction evidence="1">
        <text>5-(2-hydroxyethyl)-4-methylthiazole + ATP = 4-methyl-5-(2-phosphooxyethyl)-thiazole + ADP + H(+)</text>
        <dbReference type="Rhea" id="RHEA:24212"/>
        <dbReference type="ChEBI" id="CHEBI:15378"/>
        <dbReference type="ChEBI" id="CHEBI:17957"/>
        <dbReference type="ChEBI" id="CHEBI:30616"/>
        <dbReference type="ChEBI" id="CHEBI:58296"/>
        <dbReference type="ChEBI" id="CHEBI:456216"/>
        <dbReference type="EC" id="2.7.1.50"/>
    </reaction>
</comment>
<comment type="cofactor">
    <cofactor evidence="1">
        <name>Mg(2+)</name>
        <dbReference type="ChEBI" id="CHEBI:18420"/>
    </cofactor>
</comment>
<comment type="pathway">
    <text evidence="1">Cofactor biosynthesis; thiamine diphosphate biosynthesis; 4-methyl-5-(2-phosphoethyl)-thiazole from 5-(2-hydroxyethyl)-4-methylthiazole: step 1/1.</text>
</comment>
<comment type="similarity">
    <text evidence="1">Belongs to the Thz kinase family.</text>
</comment>
<sequence length="267" mass="26358">MRAGEALRRLGERRPLVHHITNYVSVGLVANATLCTGALPVMAHAREEVAEMSGAAGALVLNIGTLDERQVESMLAAGRAANERGIPVILDPVGAGATALRTRTAGRLLSELEVSAVCGNAGEIATLAGLAAEVRGVESIGGDAREAALKAASSLGLTVAATGAVDYVCGGGRALAVENGHPLLGRVVGSGCASTAVVGCFAAAAGSADPETVAHALAYFGCAGEEAARGAGGPGTFEARLLDALAALSSDPSRLSGRLRVGDAGAG</sequence>
<reference key="1">
    <citation type="submission" date="2006-06" db="EMBL/GenBank/DDBJ databases">
        <title>Complete sequence of Rubrobacter xylanophilus DSM 9941.</title>
        <authorList>
            <consortium name="US DOE Joint Genome Institute"/>
            <person name="Copeland A."/>
            <person name="Lucas S."/>
            <person name="Lapidus A."/>
            <person name="Barry K."/>
            <person name="Detter J.C."/>
            <person name="Glavina del Rio T."/>
            <person name="Hammon N."/>
            <person name="Israni S."/>
            <person name="Dalin E."/>
            <person name="Tice H."/>
            <person name="Pitluck S."/>
            <person name="Munk A.C."/>
            <person name="Brettin T."/>
            <person name="Bruce D."/>
            <person name="Han C."/>
            <person name="Tapia R."/>
            <person name="Gilna P."/>
            <person name="Schmutz J."/>
            <person name="Larimer F."/>
            <person name="Land M."/>
            <person name="Hauser L."/>
            <person name="Kyrpides N."/>
            <person name="Lykidis A."/>
            <person name="da Costa M.S."/>
            <person name="Rainey F.A."/>
            <person name="Empadinhas N."/>
            <person name="Jolivet E."/>
            <person name="Battista J.R."/>
            <person name="Richardson P."/>
        </authorList>
    </citation>
    <scope>NUCLEOTIDE SEQUENCE [LARGE SCALE GENOMIC DNA]</scope>
    <source>
        <strain>DSM 9941 / JCM 11954 / NBRC 16129 / PRD-1</strain>
    </source>
</reference>
<dbReference type="EC" id="2.7.1.50" evidence="1"/>
<dbReference type="EMBL" id="CP000386">
    <property type="protein sequence ID" value="ABG05704.1"/>
    <property type="molecule type" value="Genomic_DNA"/>
</dbReference>
<dbReference type="RefSeq" id="WP_011565713.1">
    <property type="nucleotide sequence ID" value="NC_008148.1"/>
</dbReference>
<dbReference type="SMR" id="Q1ASC4"/>
<dbReference type="STRING" id="266117.Rxyl_2790"/>
<dbReference type="KEGG" id="rxy:Rxyl_2790"/>
<dbReference type="eggNOG" id="COG2145">
    <property type="taxonomic scope" value="Bacteria"/>
</dbReference>
<dbReference type="HOGENOM" id="CLU_019943_0_1_11"/>
<dbReference type="OrthoDB" id="8909021at2"/>
<dbReference type="PhylomeDB" id="Q1ASC4"/>
<dbReference type="UniPathway" id="UPA00060">
    <property type="reaction ID" value="UER00139"/>
</dbReference>
<dbReference type="Proteomes" id="UP000006637">
    <property type="component" value="Chromosome"/>
</dbReference>
<dbReference type="GO" id="GO:0005524">
    <property type="term" value="F:ATP binding"/>
    <property type="evidence" value="ECO:0007669"/>
    <property type="project" value="UniProtKB-UniRule"/>
</dbReference>
<dbReference type="GO" id="GO:0004417">
    <property type="term" value="F:hydroxyethylthiazole kinase activity"/>
    <property type="evidence" value="ECO:0007669"/>
    <property type="project" value="UniProtKB-UniRule"/>
</dbReference>
<dbReference type="GO" id="GO:0000287">
    <property type="term" value="F:magnesium ion binding"/>
    <property type="evidence" value="ECO:0007669"/>
    <property type="project" value="UniProtKB-UniRule"/>
</dbReference>
<dbReference type="GO" id="GO:0009228">
    <property type="term" value="P:thiamine biosynthetic process"/>
    <property type="evidence" value="ECO:0007669"/>
    <property type="project" value="UniProtKB-KW"/>
</dbReference>
<dbReference type="GO" id="GO:0009229">
    <property type="term" value="P:thiamine diphosphate biosynthetic process"/>
    <property type="evidence" value="ECO:0007669"/>
    <property type="project" value="UniProtKB-UniRule"/>
</dbReference>
<dbReference type="CDD" id="cd01170">
    <property type="entry name" value="THZ_kinase"/>
    <property type="match status" value="1"/>
</dbReference>
<dbReference type="Gene3D" id="3.40.1190.20">
    <property type="match status" value="1"/>
</dbReference>
<dbReference type="HAMAP" id="MF_00228">
    <property type="entry name" value="Thz_kinase"/>
    <property type="match status" value="1"/>
</dbReference>
<dbReference type="InterPro" id="IPR000417">
    <property type="entry name" value="Hyethyz_kinase"/>
</dbReference>
<dbReference type="InterPro" id="IPR029056">
    <property type="entry name" value="Ribokinase-like"/>
</dbReference>
<dbReference type="NCBIfam" id="NF006830">
    <property type="entry name" value="PRK09355.1"/>
    <property type="match status" value="1"/>
</dbReference>
<dbReference type="Pfam" id="PF02110">
    <property type="entry name" value="HK"/>
    <property type="match status" value="1"/>
</dbReference>
<dbReference type="PIRSF" id="PIRSF000513">
    <property type="entry name" value="Thz_kinase"/>
    <property type="match status" value="1"/>
</dbReference>
<dbReference type="PRINTS" id="PR01099">
    <property type="entry name" value="HYETHTZKNASE"/>
</dbReference>
<dbReference type="SUPFAM" id="SSF53613">
    <property type="entry name" value="Ribokinase-like"/>
    <property type="match status" value="1"/>
</dbReference>
<evidence type="ECO:0000255" key="1">
    <source>
        <dbReference type="HAMAP-Rule" id="MF_00228"/>
    </source>
</evidence>
<feature type="chain" id="PRO_0000336570" description="Hydroxyethylthiazole kinase">
    <location>
        <begin position="1"/>
        <end position="267"/>
    </location>
</feature>
<feature type="binding site" evidence="1">
    <location>
        <position position="42"/>
    </location>
    <ligand>
        <name>substrate</name>
    </ligand>
</feature>
<feature type="binding site" evidence="1">
    <location>
        <position position="118"/>
    </location>
    <ligand>
        <name>ATP</name>
        <dbReference type="ChEBI" id="CHEBI:30616"/>
    </ligand>
</feature>
<feature type="binding site" evidence="1">
    <location>
        <position position="162"/>
    </location>
    <ligand>
        <name>ATP</name>
        <dbReference type="ChEBI" id="CHEBI:30616"/>
    </ligand>
</feature>
<feature type="binding site" evidence="1">
    <location>
        <position position="189"/>
    </location>
    <ligand>
        <name>substrate</name>
    </ligand>
</feature>
<protein>
    <recommendedName>
        <fullName evidence="1">Hydroxyethylthiazole kinase</fullName>
        <ecNumber evidence="1">2.7.1.50</ecNumber>
    </recommendedName>
    <alternativeName>
        <fullName evidence="1">4-methyl-5-beta-hydroxyethylthiazole kinase</fullName>
        <shortName evidence="1">TH kinase</shortName>
        <shortName evidence="1">Thz kinase</shortName>
    </alternativeName>
</protein>
<proteinExistence type="inferred from homology"/>
<keyword id="KW-0067">ATP-binding</keyword>
<keyword id="KW-0418">Kinase</keyword>
<keyword id="KW-0460">Magnesium</keyword>
<keyword id="KW-0479">Metal-binding</keyword>
<keyword id="KW-0547">Nucleotide-binding</keyword>
<keyword id="KW-1185">Reference proteome</keyword>
<keyword id="KW-0784">Thiamine biosynthesis</keyword>
<keyword id="KW-0808">Transferase</keyword>